<feature type="chain" id="PRO_0000119568" description="Glutamate--tRNA ligase">
    <location>
        <begin position="1"/>
        <end position="530"/>
    </location>
</feature>
<feature type="short sequence motif" description="'HIGH' region" evidence="1">
    <location>
        <begin position="26"/>
        <end position="36"/>
    </location>
</feature>
<feature type="short sequence motif" description="'KMSKS' region" evidence="1">
    <location>
        <begin position="267"/>
        <end position="271"/>
    </location>
</feature>
<feature type="binding site" evidence="1">
    <location>
        <position position="270"/>
    </location>
    <ligand>
        <name>ATP</name>
        <dbReference type="ChEBI" id="CHEBI:30616"/>
    </ligand>
</feature>
<name>SYE_GLOVI</name>
<organism>
    <name type="scientific">Gloeobacter violaceus (strain ATCC 29082 / PCC 7421)</name>
    <dbReference type="NCBI Taxonomy" id="251221"/>
    <lineage>
        <taxon>Bacteria</taxon>
        <taxon>Bacillati</taxon>
        <taxon>Cyanobacteriota</taxon>
        <taxon>Cyanophyceae</taxon>
        <taxon>Gloeobacterales</taxon>
        <taxon>Gloeobacteraceae</taxon>
        <taxon>Gloeobacter</taxon>
    </lineage>
</organism>
<comment type="function">
    <text evidence="1">Catalyzes the attachment of glutamate to tRNA(Glu) in a two-step reaction: glutamate is first activated by ATP to form Glu-AMP and then transferred to the acceptor end of tRNA(Glu).</text>
</comment>
<comment type="catalytic activity">
    <reaction evidence="1">
        <text>tRNA(Glu) + L-glutamate + ATP = L-glutamyl-tRNA(Glu) + AMP + diphosphate</text>
        <dbReference type="Rhea" id="RHEA:23540"/>
        <dbReference type="Rhea" id="RHEA-COMP:9663"/>
        <dbReference type="Rhea" id="RHEA-COMP:9680"/>
        <dbReference type="ChEBI" id="CHEBI:29985"/>
        <dbReference type="ChEBI" id="CHEBI:30616"/>
        <dbReference type="ChEBI" id="CHEBI:33019"/>
        <dbReference type="ChEBI" id="CHEBI:78442"/>
        <dbReference type="ChEBI" id="CHEBI:78520"/>
        <dbReference type="ChEBI" id="CHEBI:456215"/>
        <dbReference type="EC" id="6.1.1.17"/>
    </reaction>
</comment>
<comment type="subunit">
    <text evidence="1">Monomer.</text>
</comment>
<comment type="subcellular location">
    <subcellularLocation>
        <location evidence="1">Cytoplasm</location>
    </subcellularLocation>
</comment>
<comment type="similarity">
    <text evidence="1">Belongs to the class-I aminoacyl-tRNA synthetase family. Glutamate--tRNA ligase type 1 subfamily.</text>
</comment>
<dbReference type="EC" id="6.1.1.17" evidence="1"/>
<dbReference type="EMBL" id="BA000045">
    <property type="protein sequence ID" value="BAC90319.1"/>
    <property type="molecule type" value="Genomic_DNA"/>
</dbReference>
<dbReference type="RefSeq" id="NP_925324.1">
    <property type="nucleotide sequence ID" value="NC_005125.1"/>
</dbReference>
<dbReference type="RefSeq" id="WP_011142374.1">
    <property type="nucleotide sequence ID" value="NC_005125.1"/>
</dbReference>
<dbReference type="SMR" id="Q7NI06"/>
<dbReference type="FunCoup" id="Q7NI06">
    <property type="interactions" value="379"/>
</dbReference>
<dbReference type="STRING" id="251221.gene:10759875"/>
<dbReference type="EnsemblBacteria" id="BAC90319">
    <property type="protein sequence ID" value="BAC90319"/>
    <property type="gene ID" value="BAC90319"/>
</dbReference>
<dbReference type="KEGG" id="gvi:gll2378"/>
<dbReference type="PATRIC" id="fig|251221.4.peg.2417"/>
<dbReference type="eggNOG" id="COG0008">
    <property type="taxonomic scope" value="Bacteria"/>
</dbReference>
<dbReference type="HOGENOM" id="CLU_015768_6_1_3"/>
<dbReference type="InParanoid" id="Q7NI06"/>
<dbReference type="OrthoDB" id="9807503at2"/>
<dbReference type="PhylomeDB" id="Q7NI06"/>
<dbReference type="Proteomes" id="UP000000557">
    <property type="component" value="Chromosome"/>
</dbReference>
<dbReference type="GO" id="GO:0005829">
    <property type="term" value="C:cytosol"/>
    <property type="evidence" value="ECO:0000318"/>
    <property type="project" value="GO_Central"/>
</dbReference>
<dbReference type="GO" id="GO:0005524">
    <property type="term" value="F:ATP binding"/>
    <property type="evidence" value="ECO:0007669"/>
    <property type="project" value="UniProtKB-UniRule"/>
</dbReference>
<dbReference type="GO" id="GO:0004818">
    <property type="term" value="F:glutamate-tRNA ligase activity"/>
    <property type="evidence" value="ECO:0000318"/>
    <property type="project" value="GO_Central"/>
</dbReference>
<dbReference type="GO" id="GO:0000049">
    <property type="term" value="F:tRNA binding"/>
    <property type="evidence" value="ECO:0007669"/>
    <property type="project" value="InterPro"/>
</dbReference>
<dbReference type="GO" id="GO:0008270">
    <property type="term" value="F:zinc ion binding"/>
    <property type="evidence" value="ECO:0007669"/>
    <property type="project" value="InterPro"/>
</dbReference>
<dbReference type="GO" id="GO:0006424">
    <property type="term" value="P:glutamyl-tRNA aminoacylation"/>
    <property type="evidence" value="ECO:0000318"/>
    <property type="project" value="GO_Central"/>
</dbReference>
<dbReference type="CDD" id="cd00808">
    <property type="entry name" value="GluRS_core"/>
    <property type="match status" value="1"/>
</dbReference>
<dbReference type="Gene3D" id="1.10.10.350">
    <property type="match status" value="1"/>
</dbReference>
<dbReference type="Gene3D" id="3.40.50.620">
    <property type="entry name" value="HUPs"/>
    <property type="match status" value="1"/>
</dbReference>
<dbReference type="HAMAP" id="MF_00022">
    <property type="entry name" value="Glu_tRNA_synth_type1"/>
    <property type="match status" value="1"/>
</dbReference>
<dbReference type="InterPro" id="IPR045462">
    <property type="entry name" value="aa-tRNA-synth_I_cd-bd"/>
</dbReference>
<dbReference type="InterPro" id="IPR020751">
    <property type="entry name" value="aa-tRNA-synth_I_codon-bd_sub2"/>
</dbReference>
<dbReference type="InterPro" id="IPR008925">
    <property type="entry name" value="aa_tRNA-synth_I_cd-bd_sf"/>
</dbReference>
<dbReference type="InterPro" id="IPR004527">
    <property type="entry name" value="Glu-tRNA-ligase_bac/mito"/>
</dbReference>
<dbReference type="InterPro" id="IPR000924">
    <property type="entry name" value="Glu/Gln-tRNA-synth"/>
</dbReference>
<dbReference type="InterPro" id="IPR020058">
    <property type="entry name" value="Glu/Gln-tRNA-synth_Ib_cat-dom"/>
</dbReference>
<dbReference type="InterPro" id="IPR049940">
    <property type="entry name" value="GluQ/Sye"/>
</dbReference>
<dbReference type="InterPro" id="IPR033910">
    <property type="entry name" value="GluRS_core"/>
</dbReference>
<dbReference type="InterPro" id="IPR014729">
    <property type="entry name" value="Rossmann-like_a/b/a_fold"/>
</dbReference>
<dbReference type="NCBIfam" id="TIGR00464">
    <property type="entry name" value="gltX_bact"/>
    <property type="match status" value="1"/>
</dbReference>
<dbReference type="PANTHER" id="PTHR43311">
    <property type="entry name" value="GLUTAMATE--TRNA LIGASE"/>
    <property type="match status" value="1"/>
</dbReference>
<dbReference type="PANTHER" id="PTHR43311:SF2">
    <property type="entry name" value="GLUTAMATE--TRNA LIGASE, MITOCHONDRIAL-RELATED"/>
    <property type="match status" value="1"/>
</dbReference>
<dbReference type="Pfam" id="PF19269">
    <property type="entry name" value="Anticodon_2"/>
    <property type="match status" value="1"/>
</dbReference>
<dbReference type="Pfam" id="PF00749">
    <property type="entry name" value="tRNA-synt_1c"/>
    <property type="match status" value="1"/>
</dbReference>
<dbReference type="PRINTS" id="PR00987">
    <property type="entry name" value="TRNASYNTHGLU"/>
</dbReference>
<dbReference type="SUPFAM" id="SSF48163">
    <property type="entry name" value="An anticodon-binding domain of class I aminoacyl-tRNA synthetases"/>
    <property type="match status" value="1"/>
</dbReference>
<dbReference type="SUPFAM" id="SSF52374">
    <property type="entry name" value="Nucleotidylyl transferase"/>
    <property type="match status" value="1"/>
</dbReference>
<keyword id="KW-0030">Aminoacyl-tRNA synthetase</keyword>
<keyword id="KW-0067">ATP-binding</keyword>
<keyword id="KW-0963">Cytoplasm</keyword>
<keyword id="KW-0436">Ligase</keyword>
<keyword id="KW-0547">Nucleotide-binding</keyword>
<keyword id="KW-0648">Protein biosynthesis</keyword>
<keyword id="KW-1185">Reference proteome</keyword>
<protein>
    <recommendedName>
        <fullName evidence="1">Glutamate--tRNA ligase</fullName>
        <ecNumber evidence="1">6.1.1.17</ecNumber>
    </recommendedName>
    <alternativeName>
        <fullName evidence="1">Glutamyl-tRNA synthetase</fullName>
        <shortName evidence="1">GluRS</shortName>
    </alternativeName>
</protein>
<gene>
    <name evidence="1" type="primary">gltX</name>
    <name type="ordered locus">gll2378</name>
</gene>
<reference key="1">
    <citation type="journal article" date="2003" name="DNA Res.">
        <title>Complete genome structure of Gloeobacter violaceus PCC 7421, a cyanobacterium that lacks thylakoids.</title>
        <authorList>
            <person name="Nakamura Y."/>
            <person name="Kaneko T."/>
            <person name="Sato S."/>
            <person name="Mimuro M."/>
            <person name="Miyashita H."/>
            <person name="Tsuchiya T."/>
            <person name="Sasamoto S."/>
            <person name="Watanabe A."/>
            <person name="Kawashima K."/>
            <person name="Kishida Y."/>
            <person name="Kiyokawa C."/>
            <person name="Kohara M."/>
            <person name="Matsumoto M."/>
            <person name="Matsuno A."/>
            <person name="Nakazaki N."/>
            <person name="Shimpo S."/>
            <person name="Takeuchi C."/>
            <person name="Yamada M."/>
            <person name="Tabata S."/>
        </authorList>
    </citation>
    <scope>NUCLEOTIDE SEQUENCE [LARGE SCALE GENOMIC DNA]</scope>
    <source>
        <strain>ATCC 29082 / PCC 7421</strain>
    </source>
</reference>
<evidence type="ECO:0000255" key="1">
    <source>
        <dbReference type="HAMAP-Rule" id="MF_00022"/>
    </source>
</evidence>
<proteinExistence type="inferred from homology"/>
<accession>Q7NI06</accession>
<sequence length="530" mass="59558">MNFEQYESAYPPRALPPGAWVTRIGPSPTGKAHIGTALQAVINRSLADGSGGAFLLRIEDTDRERFVEGAIEDLLAALDWLGIRPDESVAHGGAYGPYVQSERLPIYQAAARQLVEVGHAYYCFCTPERLESVRMAQQAAGKPTMYDRHCRNLGREEVEKRLATGEKAVVRLKVPDGTEIAFDDLARGRIAFESQTIDDSVLLKSDGFPTYHLAVVVDDHLMRVNQIIRGEEWIPSTPKHVLLYQYFGWPMPRIAHTPILRDMSRRKLSKRSGDTSITGYRVQGYLPEGLRNFLTRIIWPHPEGKDVYDHEEFVRLFKAEDLPNTGPIVDPQLLDFINGQYLRRLSSAELYTATVEYLKFLLGLHQDIIFETYHPSAPIKQTLTRAELGSFYSAFTANPTYTERVLTLEPERYKRLSDIVVSTGFFFPALFTPADPKLLAKPLGSPEKAGALLGEYLRLYRPDAAQAEWEQSVRELAHEAGVKDGKLFMTLRVAVTGREQTPPLFEVLTILGGDEVQRRLELAAAMPVSL</sequence>